<reference key="1">
    <citation type="submission" date="2007-03" db="EMBL/GenBank/DDBJ databases">
        <title>Sequencing analysis of Lobularia maritima chloroplast DNA.</title>
        <authorList>
            <person name="Hosouchi T."/>
            <person name="Tsuruoka H."/>
            <person name="Kotani H."/>
        </authorList>
    </citation>
    <scope>NUCLEOTIDE SEQUENCE [LARGE SCALE GENOMIC DNA]</scope>
</reference>
<keyword id="KW-0150">Chloroplast</keyword>
<keyword id="KW-0934">Plastid</keyword>
<keyword id="KW-0687">Ribonucleoprotein</keyword>
<keyword id="KW-0689">Ribosomal protein</keyword>
<keyword id="KW-0694">RNA-binding</keyword>
<keyword id="KW-0699">rRNA-binding</keyword>
<gene>
    <name evidence="1" type="primary">rps11</name>
</gene>
<sequence>MAKPILRIGSRKNTRSGSRKNVRRIPKGVIHVQASFNNTIVTVTDVRGRVISWSSAGTCGFRGTRRGTPFAAQTAAGNAIRAVVDQGMQRAEVRIKGPGLGRDAALRAIRRSGILLSFVRDVTPMPHNGCRPPKKRRV</sequence>
<name>RR11_LOBMA</name>
<accession>A4QLM7</accession>
<dbReference type="EMBL" id="AP009375">
    <property type="protein sequence ID" value="BAF50582.1"/>
    <property type="molecule type" value="Genomic_DNA"/>
</dbReference>
<dbReference type="RefSeq" id="YP_001123758.1">
    <property type="nucleotide sequence ID" value="NC_009274.1"/>
</dbReference>
<dbReference type="SMR" id="A4QLM7"/>
<dbReference type="GeneID" id="4964880"/>
<dbReference type="GO" id="GO:0009507">
    <property type="term" value="C:chloroplast"/>
    <property type="evidence" value="ECO:0007669"/>
    <property type="project" value="UniProtKB-SubCell"/>
</dbReference>
<dbReference type="GO" id="GO:1990904">
    <property type="term" value="C:ribonucleoprotein complex"/>
    <property type="evidence" value="ECO:0007669"/>
    <property type="project" value="UniProtKB-KW"/>
</dbReference>
<dbReference type="GO" id="GO:0005840">
    <property type="term" value="C:ribosome"/>
    <property type="evidence" value="ECO:0007669"/>
    <property type="project" value="UniProtKB-KW"/>
</dbReference>
<dbReference type="GO" id="GO:0019843">
    <property type="term" value="F:rRNA binding"/>
    <property type="evidence" value="ECO:0007669"/>
    <property type="project" value="UniProtKB-UniRule"/>
</dbReference>
<dbReference type="GO" id="GO:0003735">
    <property type="term" value="F:structural constituent of ribosome"/>
    <property type="evidence" value="ECO:0007669"/>
    <property type="project" value="InterPro"/>
</dbReference>
<dbReference type="GO" id="GO:0006412">
    <property type="term" value="P:translation"/>
    <property type="evidence" value="ECO:0007669"/>
    <property type="project" value="UniProtKB-UniRule"/>
</dbReference>
<dbReference type="FunFam" id="3.30.420.80:FF:000003">
    <property type="entry name" value="30S ribosomal protein S11, chloroplastic"/>
    <property type="match status" value="1"/>
</dbReference>
<dbReference type="Gene3D" id="3.30.420.80">
    <property type="entry name" value="Ribosomal protein S11"/>
    <property type="match status" value="1"/>
</dbReference>
<dbReference type="HAMAP" id="MF_01310">
    <property type="entry name" value="Ribosomal_uS11"/>
    <property type="match status" value="1"/>
</dbReference>
<dbReference type="InterPro" id="IPR001971">
    <property type="entry name" value="Ribosomal_uS11"/>
</dbReference>
<dbReference type="InterPro" id="IPR019981">
    <property type="entry name" value="Ribosomal_uS11_bac-type"/>
</dbReference>
<dbReference type="InterPro" id="IPR018102">
    <property type="entry name" value="Ribosomal_uS11_CS"/>
</dbReference>
<dbReference type="InterPro" id="IPR036967">
    <property type="entry name" value="Ribosomal_uS11_sf"/>
</dbReference>
<dbReference type="NCBIfam" id="NF003698">
    <property type="entry name" value="PRK05309.1"/>
    <property type="match status" value="1"/>
</dbReference>
<dbReference type="NCBIfam" id="TIGR03632">
    <property type="entry name" value="uS11_bact"/>
    <property type="match status" value="1"/>
</dbReference>
<dbReference type="PANTHER" id="PTHR11759">
    <property type="entry name" value="40S RIBOSOMAL PROTEIN S14/30S RIBOSOMAL PROTEIN S11"/>
    <property type="match status" value="1"/>
</dbReference>
<dbReference type="Pfam" id="PF00411">
    <property type="entry name" value="Ribosomal_S11"/>
    <property type="match status" value="1"/>
</dbReference>
<dbReference type="PIRSF" id="PIRSF002131">
    <property type="entry name" value="Ribosomal_S11"/>
    <property type="match status" value="1"/>
</dbReference>
<dbReference type="SUPFAM" id="SSF53137">
    <property type="entry name" value="Translational machinery components"/>
    <property type="match status" value="1"/>
</dbReference>
<dbReference type="PROSITE" id="PS00054">
    <property type="entry name" value="RIBOSOMAL_S11"/>
    <property type="match status" value="1"/>
</dbReference>
<protein>
    <recommendedName>
        <fullName evidence="1">Small ribosomal subunit protein uS11c</fullName>
    </recommendedName>
    <alternativeName>
        <fullName evidence="3">30S ribosomal protein S11, chloroplastic</fullName>
    </alternativeName>
</protein>
<comment type="subunit">
    <text evidence="1">Part of the 30S ribosomal subunit.</text>
</comment>
<comment type="subcellular location">
    <subcellularLocation>
        <location>Plastid</location>
        <location>Chloroplast</location>
    </subcellularLocation>
</comment>
<comment type="similarity">
    <text evidence="1">Belongs to the universal ribosomal protein uS11 family.</text>
</comment>
<evidence type="ECO:0000255" key="1">
    <source>
        <dbReference type="HAMAP-Rule" id="MF_01310"/>
    </source>
</evidence>
<evidence type="ECO:0000256" key="2">
    <source>
        <dbReference type="SAM" id="MobiDB-lite"/>
    </source>
</evidence>
<evidence type="ECO:0000305" key="3"/>
<proteinExistence type="inferred from homology"/>
<organism>
    <name type="scientific">Lobularia maritima</name>
    <name type="common">Sweet alyssum</name>
    <name type="synonym">Alyssum maritimum</name>
    <dbReference type="NCBI Taxonomy" id="226051"/>
    <lineage>
        <taxon>Eukaryota</taxon>
        <taxon>Viridiplantae</taxon>
        <taxon>Streptophyta</taxon>
        <taxon>Embryophyta</taxon>
        <taxon>Tracheophyta</taxon>
        <taxon>Spermatophyta</taxon>
        <taxon>Magnoliopsida</taxon>
        <taxon>eudicotyledons</taxon>
        <taxon>Gunneridae</taxon>
        <taxon>Pentapetalae</taxon>
        <taxon>rosids</taxon>
        <taxon>malvids</taxon>
        <taxon>Brassicales</taxon>
        <taxon>Brassicaceae</taxon>
        <taxon>Anastaticeae</taxon>
        <taxon>Lobularia</taxon>
    </lineage>
</organism>
<feature type="chain" id="PRO_0000294920" description="Small ribosomal subunit protein uS11c">
    <location>
        <begin position="1"/>
        <end position="138"/>
    </location>
</feature>
<feature type="region of interest" description="Disordered" evidence="2">
    <location>
        <begin position="1"/>
        <end position="23"/>
    </location>
</feature>
<feature type="compositionally biased region" description="Basic residues" evidence="2">
    <location>
        <begin position="9"/>
        <end position="23"/>
    </location>
</feature>
<geneLocation type="chloroplast"/>